<comment type="function">
    <text evidence="1">DNA ligase that catalyzes the formation of phosphodiester linkages between 5'-phosphoryl and 3'-hydroxyl groups in double-stranded DNA using NAD as a coenzyme and as the energy source for the reaction. It is essential for DNA replication and repair of damaged DNA.</text>
</comment>
<comment type="catalytic activity">
    <reaction evidence="1">
        <text>NAD(+) + (deoxyribonucleotide)n-3'-hydroxyl + 5'-phospho-(deoxyribonucleotide)m = (deoxyribonucleotide)n+m + AMP + beta-nicotinamide D-nucleotide.</text>
        <dbReference type="EC" id="6.5.1.2"/>
    </reaction>
</comment>
<comment type="cofactor">
    <cofactor evidence="1">
        <name>Mg(2+)</name>
        <dbReference type="ChEBI" id="CHEBI:18420"/>
    </cofactor>
    <cofactor evidence="1">
        <name>Mn(2+)</name>
        <dbReference type="ChEBI" id="CHEBI:29035"/>
    </cofactor>
</comment>
<comment type="similarity">
    <text evidence="1">Belongs to the NAD-dependent DNA ligase family. LigA subfamily.</text>
</comment>
<accession>Q2NSC2</accession>
<organism>
    <name type="scientific">Sodalis glossinidius (strain morsitans)</name>
    <dbReference type="NCBI Taxonomy" id="343509"/>
    <lineage>
        <taxon>Bacteria</taxon>
        <taxon>Pseudomonadati</taxon>
        <taxon>Pseudomonadota</taxon>
        <taxon>Gammaproteobacteria</taxon>
        <taxon>Enterobacterales</taxon>
        <taxon>Bruguierivoracaceae</taxon>
        <taxon>Sodalis</taxon>
    </lineage>
</organism>
<keyword id="KW-0227">DNA damage</keyword>
<keyword id="KW-0234">DNA repair</keyword>
<keyword id="KW-0235">DNA replication</keyword>
<keyword id="KW-0436">Ligase</keyword>
<keyword id="KW-0460">Magnesium</keyword>
<keyword id="KW-0464">Manganese</keyword>
<keyword id="KW-0479">Metal-binding</keyword>
<keyword id="KW-0520">NAD</keyword>
<keyword id="KW-0862">Zinc</keyword>
<feature type="chain" id="PRO_0000313442" description="DNA ligase">
    <location>
        <begin position="1"/>
        <end position="678"/>
    </location>
</feature>
<feature type="domain" description="BRCT" evidence="1">
    <location>
        <begin position="596"/>
        <end position="678"/>
    </location>
</feature>
<feature type="active site" description="N6-AMP-lysine intermediate" evidence="1">
    <location>
        <position position="115"/>
    </location>
</feature>
<feature type="binding site" evidence="1">
    <location>
        <begin position="32"/>
        <end position="36"/>
    </location>
    <ligand>
        <name>NAD(+)</name>
        <dbReference type="ChEBI" id="CHEBI:57540"/>
    </ligand>
</feature>
<feature type="binding site" evidence="1">
    <location>
        <begin position="81"/>
        <end position="82"/>
    </location>
    <ligand>
        <name>NAD(+)</name>
        <dbReference type="ChEBI" id="CHEBI:57540"/>
    </ligand>
</feature>
<feature type="binding site" evidence="1">
    <location>
        <position position="113"/>
    </location>
    <ligand>
        <name>NAD(+)</name>
        <dbReference type="ChEBI" id="CHEBI:57540"/>
    </ligand>
</feature>
<feature type="binding site" evidence="1">
    <location>
        <position position="136"/>
    </location>
    <ligand>
        <name>NAD(+)</name>
        <dbReference type="ChEBI" id="CHEBI:57540"/>
    </ligand>
</feature>
<feature type="binding site" evidence="1">
    <location>
        <position position="174"/>
    </location>
    <ligand>
        <name>NAD(+)</name>
        <dbReference type="ChEBI" id="CHEBI:57540"/>
    </ligand>
</feature>
<feature type="binding site" evidence="1">
    <location>
        <position position="291"/>
    </location>
    <ligand>
        <name>NAD(+)</name>
        <dbReference type="ChEBI" id="CHEBI:57540"/>
    </ligand>
</feature>
<feature type="binding site" evidence="1">
    <location>
        <position position="315"/>
    </location>
    <ligand>
        <name>NAD(+)</name>
        <dbReference type="ChEBI" id="CHEBI:57540"/>
    </ligand>
</feature>
<feature type="binding site" evidence="1">
    <location>
        <position position="409"/>
    </location>
    <ligand>
        <name>Zn(2+)</name>
        <dbReference type="ChEBI" id="CHEBI:29105"/>
    </ligand>
</feature>
<feature type="binding site" evidence="1">
    <location>
        <position position="412"/>
    </location>
    <ligand>
        <name>Zn(2+)</name>
        <dbReference type="ChEBI" id="CHEBI:29105"/>
    </ligand>
</feature>
<feature type="binding site" evidence="1">
    <location>
        <position position="427"/>
    </location>
    <ligand>
        <name>Zn(2+)</name>
        <dbReference type="ChEBI" id="CHEBI:29105"/>
    </ligand>
</feature>
<feature type="binding site" evidence="1">
    <location>
        <position position="433"/>
    </location>
    <ligand>
        <name>Zn(2+)</name>
        <dbReference type="ChEBI" id="CHEBI:29105"/>
    </ligand>
</feature>
<evidence type="ECO:0000255" key="1">
    <source>
        <dbReference type="HAMAP-Rule" id="MF_01588"/>
    </source>
</evidence>
<proteinExistence type="inferred from homology"/>
<dbReference type="EC" id="6.5.1.2" evidence="1"/>
<dbReference type="EMBL" id="AP008232">
    <property type="protein sequence ID" value="BAE74953.1"/>
    <property type="molecule type" value="Genomic_DNA"/>
</dbReference>
<dbReference type="RefSeq" id="WP_011411503.1">
    <property type="nucleotide sequence ID" value="NC_007712.1"/>
</dbReference>
<dbReference type="SMR" id="Q2NSC2"/>
<dbReference type="STRING" id="343509.SG1678"/>
<dbReference type="KEGG" id="sgl:SG1678"/>
<dbReference type="eggNOG" id="COG0272">
    <property type="taxonomic scope" value="Bacteria"/>
</dbReference>
<dbReference type="HOGENOM" id="CLU_007764_2_1_6"/>
<dbReference type="OrthoDB" id="9759736at2"/>
<dbReference type="BioCyc" id="SGLO343509:SGP1_RS15265-MONOMER"/>
<dbReference type="Proteomes" id="UP000001932">
    <property type="component" value="Chromosome"/>
</dbReference>
<dbReference type="GO" id="GO:0005829">
    <property type="term" value="C:cytosol"/>
    <property type="evidence" value="ECO:0007669"/>
    <property type="project" value="TreeGrafter"/>
</dbReference>
<dbReference type="GO" id="GO:0003677">
    <property type="term" value="F:DNA binding"/>
    <property type="evidence" value="ECO:0007669"/>
    <property type="project" value="InterPro"/>
</dbReference>
<dbReference type="GO" id="GO:0003911">
    <property type="term" value="F:DNA ligase (NAD+) activity"/>
    <property type="evidence" value="ECO:0007669"/>
    <property type="project" value="UniProtKB-UniRule"/>
</dbReference>
<dbReference type="GO" id="GO:0046872">
    <property type="term" value="F:metal ion binding"/>
    <property type="evidence" value="ECO:0007669"/>
    <property type="project" value="UniProtKB-KW"/>
</dbReference>
<dbReference type="GO" id="GO:0006281">
    <property type="term" value="P:DNA repair"/>
    <property type="evidence" value="ECO:0007669"/>
    <property type="project" value="UniProtKB-KW"/>
</dbReference>
<dbReference type="GO" id="GO:0006260">
    <property type="term" value="P:DNA replication"/>
    <property type="evidence" value="ECO:0007669"/>
    <property type="project" value="UniProtKB-KW"/>
</dbReference>
<dbReference type="CDD" id="cd17748">
    <property type="entry name" value="BRCT_DNA_ligase_like"/>
    <property type="match status" value="1"/>
</dbReference>
<dbReference type="CDD" id="cd00114">
    <property type="entry name" value="LIGANc"/>
    <property type="match status" value="1"/>
</dbReference>
<dbReference type="FunFam" id="1.10.150.20:FF:000006">
    <property type="entry name" value="DNA ligase"/>
    <property type="match status" value="1"/>
</dbReference>
<dbReference type="FunFam" id="1.10.150.20:FF:000007">
    <property type="entry name" value="DNA ligase"/>
    <property type="match status" value="1"/>
</dbReference>
<dbReference type="FunFam" id="1.10.287.610:FF:000002">
    <property type="entry name" value="DNA ligase"/>
    <property type="match status" value="1"/>
</dbReference>
<dbReference type="FunFam" id="2.40.50.140:FF:000012">
    <property type="entry name" value="DNA ligase"/>
    <property type="match status" value="1"/>
</dbReference>
<dbReference type="FunFam" id="3.30.470.30:FF:000001">
    <property type="entry name" value="DNA ligase"/>
    <property type="match status" value="1"/>
</dbReference>
<dbReference type="Gene3D" id="6.20.10.30">
    <property type="match status" value="1"/>
</dbReference>
<dbReference type="Gene3D" id="1.10.150.20">
    <property type="entry name" value="5' to 3' exonuclease, C-terminal subdomain"/>
    <property type="match status" value="2"/>
</dbReference>
<dbReference type="Gene3D" id="3.40.50.10190">
    <property type="entry name" value="BRCT domain"/>
    <property type="match status" value="1"/>
</dbReference>
<dbReference type="Gene3D" id="3.30.470.30">
    <property type="entry name" value="DNA ligase/mRNA capping enzyme"/>
    <property type="match status" value="1"/>
</dbReference>
<dbReference type="Gene3D" id="1.10.287.610">
    <property type="entry name" value="Helix hairpin bin"/>
    <property type="match status" value="1"/>
</dbReference>
<dbReference type="Gene3D" id="2.40.50.140">
    <property type="entry name" value="Nucleic acid-binding proteins"/>
    <property type="match status" value="1"/>
</dbReference>
<dbReference type="HAMAP" id="MF_01588">
    <property type="entry name" value="DNA_ligase_A"/>
    <property type="match status" value="1"/>
</dbReference>
<dbReference type="InterPro" id="IPR001357">
    <property type="entry name" value="BRCT_dom"/>
</dbReference>
<dbReference type="InterPro" id="IPR036420">
    <property type="entry name" value="BRCT_dom_sf"/>
</dbReference>
<dbReference type="InterPro" id="IPR041663">
    <property type="entry name" value="DisA/LigA_HHH"/>
</dbReference>
<dbReference type="InterPro" id="IPR001679">
    <property type="entry name" value="DNA_ligase"/>
</dbReference>
<dbReference type="InterPro" id="IPR018239">
    <property type="entry name" value="DNA_ligase_AS"/>
</dbReference>
<dbReference type="InterPro" id="IPR033136">
    <property type="entry name" value="DNA_ligase_CS"/>
</dbReference>
<dbReference type="InterPro" id="IPR013839">
    <property type="entry name" value="DNAligase_adenylation"/>
</dbReference>
<dbReference type="InterPro" id="IPR013840">
    <property type="entry name" value="DNAligase_N"/>
</dbReference>
<dbReference type="InterPro" id="IPR003583">
    <property type="entry name" value="Hlx-hairpin-Hlx_DNA-bd_motif"/>
</dbReference>
<dbReference type="InterPro" id="IPR012340">
    <property type="entry name" value="NA-bd_OB-fold"/>
</dbReference>
<dbReference type="InterPro" id="IPR004150">
    <property type="entry name" value="NAD_DNA_ligase_OB"/>
</dbReference>
<dbReference type="InterPro" id="IPR010994">
    <property type="entry name" value="RuvA_2-like"/>
</dbReference>
<dbReference type="InterPro" id="IPR004149">
    <property type="entry name" value="Znf_DNAligase_C4"/>
</dbReference>
<dbReference type="NCBIfam" id="TIGR00575">
    <property type="entry name" value="dnlj"/>
    <property type="match status" value="1"/>
</dbReference>
<dbReference type="NCBIfam" id="NF005932">
    <property type="entry name" value="PRK07956.1"/>
    <property type="match status" value="1"/>
</dbReference>
<dbReference type="PANTHER" id="PTHR23389">
    <property type="entry name" value="CHROMOSOME TRANSMISSION FIDELITY FACTOR 18"/>
    <property type="match status" value="1"/>
</dbReference>
<dbReference type="PANTHER" id="PTHR23389:SF9">
    <property type="entry name" value="DNA LIGASE"/>
    <property type="match status" value="1"/>
</dbReference>
<dbReference type="Pfam" id="PF00533">
    <property type="entry name" value="BRCT"/>
    <property type="match status" value="1"/>
</dbReference>
<dbReference type="Pfam" id="PF01653">
    <property type="entry name" value="DNA_ligase_aden"/>
    <property type="match status" value="1"/>
</dbReference>
<dbReference type="Pfam" id="PF03120">
    <property type="entry name" value="DNA_ligase_OB"/>
    <property type="match status" value="1"/>
</dbReference>
<dbReference type="Pfam" id="PF03119">
    <property type="entry name" value="DNA_ligase_ZBD"/>
    <property type="match status" value="1"/>
</dbReference>
<dbReference type="Pfam" id="PF12826">
    <property type="entry name" value="HHH_2"/>
    <property type="match status" value="1"/>
</dbReference>
<dbReference type="Pfam" id="PF14520">
    <property type="entry name" value="HHH_5"/>
    <property type="match status" value="1"/>
</dbReference>
<dbReference type="Pfam" id="PF22745">
    <property type="entry name" value="Nlig-Ia"/>
    <property type="match status" value="1"/>
</dbReference>
<dbReference type="PIRSF" id="PIRSF001604">
    <property type="entry name" value="LigA"/>
    <property type="match status" value="1"/>
</dbReference>
<dbReference type="SMART" id="SM00292">
    <property type="entry name" value="BRCT"/>
    <property type="match status" value="1"/>
</dbReference>
<dbReference type="SMART" id="SM00278">
    <property type="entry name" value="HhH1"/>
    <property type="match status" value="4"/>
</dbReference>
<dbReference type="SMART" id="SM00532">
    <property type="entry name" value="LIGANc"/>
    <property type="match status" value="1"/>
</dbReference>
<dbReference type="SUPFAM" id="SSF52113">
    <property type="entry name" value="BRCT domain"/>
    <property type="match status" value="1"/>
</dbReference>
<dbReference type="SUPFAM" id="SSF56091">
    <property type="entry name" value="DNA ligase/mRNA capping enzyme, catalytic domain"/>
    <property type="match status" value="1"/>
</dbReference>
<dbReference type="SUPFAM" id="SSF50249">
    <property type="entry name" value="Nucleic acid-binding proteins"/>
    <property type="match status" value="1"/>
</dbReference>
<dbReference type="SUPFAM" id="SSF47781">
    <property type="entry name" value="RuvA domain 2-like"/>
    <property type="match status" value="1"/>
</dbReference>
<dbReference type="PROSITE" id="PS50172">
    <property type="entry name" value="BRCT"/>
    <property type="match status" value="1"/>
</dbReference>
<dbReference type="PROSITE" id="PS01055">
    <property type="entry name" value="DNA_LIGASE_N1"/>
    <property type="match status" value="1"/>
</dbReference>
<dbReference type="PROSITE" id="PS01056">
    <property type="entry name" value="DNA_LIGASE_N2"/>
    <property type="match status" value="1"/>
</dbReference>
<sequence>MEQIEQHILRLRKQLRHWEYLYYVEAAPEVPDSEYDRFMAELRTLEAERPDLLTADSPSQRVGGQAQSSFGQVRHEVPMLSLDNVFEEPGFLAFDKRVRDRLKRDDDMTYCCELKLDGLAVSLLYENGELVRAATRGDGATGEDITANVRTIRTIPLRLQDHDNLPRLLEIRGEVFMSEAGFLRLNETAKREGSKVFANPRNAAAGSLRQLDPSITARRPLTFYCYGVGLLEDGELPESHWERLQQFKAWGVPVSDRVRRCTGSAAVLDFYRQVHEARLSLGFDIDGVVIKVDSLALQQRLGFVARAPRWAIAYKFPAQEQLTRVRDVEFQVGRTGAITPVARLEPVLVSGAMVSNATLHNADEVERLGLMIGDTVIVRRAGDVIPQIVGVVTSERPAEVRPVAFPTQCPVCSSDVERVEGEAVLRCTAGLVCAAQRKEALKHFVSRRAMDIDGMGDKIIDQLVERELVKTPADLFRLNKEILTRLDRMGSKSAQNLLEALEKARQTTFARFLYALGIREVGEATAVNLAAAYGTLDALIAADIDSLTGVQDIGNIVATHVRHFFEETHNIEVIQDLLSPAIGIRWPEPVAAPVAASDNPFAGKTIVLTGSLSSLSRDEAKDHLVALGARVSGSVSAKTDLLIAGEAAGSKLSKAQQLNIPVMDEAEMMRLLGESSDA</sequence>
<name>DNLJ_SODGM</name>
<protein>
    <recommendedName>
        <fullName evidence="1">DNA ligase</fullName>
        <ecNumber evidence="1">6.5.1.2</ecNumber>
    </recommendedName>
    <alternativeName>
        <fullName evidence="1">Polydeoxyribonucleotide synthase [NAD(+)]</fullName>
    </alternativeName>
</protein>
<reference key="1">
    <citation type="journal article" date="2006" name="Genome Res.">
        <title>Massive genome erosion and functional adaptations provide insights into the symbiotic lifestyle of Sodalis glossinidius in the tsetse host.</title>
        <authorList>
            <person name="Toh H."/>
            <person name="Weiss B.L."/>
            <person name="Perkin S.A.H."/>
            <person name="Yamashita A."/>
            <person name="Oshima K."/>
            <person name="Hattori M."/>
            <person name="Aksoy S."/>
        </authorList>
    </citation>
    <scope>NUCLEOTIDE SEQUENCE [LARGE SCALE GENOMIC DNA]</scope>
    <source>
        <strain>morsitans</strain>
    </source>
</reference>
<gene>
    <name evidence="1" type="primary">ligA</name>
    <name type="ordered locus">SG1678</name>
</gene>